<dbReference type="EC" id="3.1.-.-" evidence="1"/>
<dbReference type="EMBL" id="AAEE01000005">
    <property type="protein sequence ID" value="EAK88615.1"/>
    <property type="molecule type" value="Genomic_DNA"/>
</dbReference>
<dbReference type="RefSeq" id="XP_626607.1">
    <property type="nucleotide sequence ID" value="XM_626607.1"/>
</dbReference>
<dbReference type="SMR" id="Q5CT62"/>
<dbReference type="STRING" id="353152.Q5CT62"/>
<dbReference type="EnsemblProtists" id="EAK88615">
    <property type="protein sequence ID" value="EAK88615"/>
    <property type="gene ID" value="cgd2_4280"/>
</dbReference>
<dbReference type="GeneID" id="3373476"/>
<dbReference type="KEGG" id="cpv:cgd2_4280"/>
<dbReference type="VEuPathDB" id="CryptoDB:cgd2_4280"/>
<dbReference type="InParanoid" id="Q5CT62"/>
<dbReference type="OMA" id="HNRGCDF"/>
<dbReference type="OrthoDB" id="24645at2759"/>
<dbReference type="Proteomes" id="UP000006726">
    <property type="component" value="Chromosome 2"/>
</dbReference>
<dbReference type="GO" id="GO:0033557">
    <property type="term" value="C:Slx1-Slx4 complex"/>
    <property type="evidence" value="ECO:0007669"/>
    <property type="project" value="UniProtKB-UniRule"/>
</dbReference>
<dbReference type="GO" id="GO:0017108">
    <property type="term" value="F:5'-flap endonuclease activity"/>
    <property type="evidence" value="ECO:0007669"/>
    <property type="project" value="InterPro"/>
</dbReference>
<dbReference type="GO" id="GO:0006310">
    <property type="term" value="P:DNA recombination"/>
    <property type="evidence" value="ECO:0007669"/>
    <property type="project" value="UniProtKB-UniRule"/>
</dbReference>
<dbReference type="GO" id="GO:0006281">
    <property type="term" value="P:DNA repair"/>
    <property type="evidence" value="ECO:0007669"/>
    <property type="project" value="UniProtKB-UniRule"/>
</dbReference>
<dbReference type="CDD" id="cd10455">
    <property type="entry name" value="GIY-YIG_SLX1"/>
    <property type="match status" value="1"/>
</dbReference>
<dbReference type="Gene3D" id="3.40.1440.10">
    <property type="entry name" value="GIY-YIG endonuclease"/>
    <property type="match status" value="1"/>
</dbReference>
<dbReference type="HAMAP" id="MF_03100">
    <property type="entry name" value="Endonuc_su_Slx1"/>
    <property type="match status" value="1"/>
</dbReference>
<dbReference type="InterPro" id="IPR000305">
    <property type="entry name" value="GIY-YIG_endonuc"/>
</dbReference>
<dbReference type="InterPro" id="IPR035901">
    <property type="entry name" value="GIY-YIG_endonuc_sf"/>
</dbReference>
<dbReference type="InterPro" id="IPR027520">
    <property type="entry name" value="Slx1"/>
</dbReference>
<dbReference type="InterPro" id="IPR050381">
    <property type="entry name" value="SLX1_endonuclease"/>
</dbReference>
<dbReference type="PANTHER" id="PTHR20208">
    <property type="entry name" value="STRUCTURE-SPECIFIC ENDONUCLEASE SUBUNIT SLX1"/>
    <property type="match status" value="1"/>
</dbReference>
<dbReference type="PANTHER" id="PTHR20208:SF13">
    <property type="entry name" value="STRUCTURE-SPECIFIC ENDONUCLEASE SUBUNIT SLX1"/>
    <property type="match status" value="1"/>
</dbReference>
<dbReference type="Pfam" id="PF01541">
    <property type="entry name" value="GIY-YIG"/>
    <property type="match status" value="1"/>
</dbReference>
<dbReference type="PROSITE" id="PS50164">
    <property type="entry name" value="GIY_YIG"/>
    <property type="match status" value="1"/>
</dbReference>
<feature type="chain" id="PRO_0000383761" description="Structure-specific endonuclease subunit SLX1 homolog">
    <location>
        <begin position="1"/>
        <end position="410"/>
    </location>
</feature>
<feature type="domain" description="GIY-YIG" evidence="1">
    <location>
        <begin position="6"/>
        <end position="89"/>
    </location>
</feature>
<keyword id="KW-0227">DNA damage</keyword>
<keyword id="KW-0233">DNA recombination</keyword>
<keyword id="KW-0234">DNA repair</keyword>
<keyword id="KW-0255">Endonuclease</keyword>
<keyword id="KW-0378">Hydrolase</keyword>
<keyword id="KW-0540">Nuclease</keyword>
<keyword id="KW-0539">Nucleus</keyword>
<keyword id="KW-1185">Reference proteome</keyword>
<comment type="function">
    <text evidence="1">Catalytic subunit of a heterodimeric structure-specific endonuclease that resolves DNA secondary structures generated during DNA repair and recombination. Has endonuclease activity towards branched DNA substrates, introducing single-strand cuts in duplex DNA close to junctions with ss-DNA.</text>
</comment>
<comment type="cofactor">
    <cofactor evidence="1">
        <name>a divalent metal cation</name>
        <dbReference type="ChEBI" id="CHEBI:60240"/>
    </cofactor>
</comment>
<comment type="subunit">
    <text evidence="1">Forms a heterodimer with a member of the SLX4 family.</text>
</comment>
<comment type="subcellular location">
    <subcellularLocation>
        <location evidence="1">Nucleus</location>
    </subcellularLocation>
</comment>
<comment type="similarity">
    <text evidence="1">Belongs to the SLX1 family.</text>
</comment>
<name>SLX1_CRYPI</name>
<protein>
    <recommendedName>
        <fullName evidence="1">Structure-specific endonuclease subunit SLX1 homolog</fullName>
        <ecNumber evidence="1">3.1.-.-</ecNumber>
    </recommendedName>
</protein>
<evidence type="ECO:0000255" key="1">
    <source>
        <dbReference type="HAMAP-Rule" id="MF_03100"/>
    </source>
</evidence>
<sequence length="410" mass="47943">MKSNIQLHYCYFLLSEAKKKASYIGYSVNPCRRLRQHNGEIKKGAKKTKSGVPWNLGICVGGFPDRVAALRFEWAWQHPNICKVTRDNIESWKIVKTKKTSENKRILNKRQWSIQQRVSILLCMTTLEPWKNMNLTVFVFKDELENTIKEVIEGIKKIKISPNFTSPNILNKDYLLMFLYFGEDSFYEKGIKFLRCDYETFKEFQKPSFDCDSDSNIEDNSNVFNPEEIISHEDSFSIKCFLCQKDIGIGRNYLEFPCCTEIKVHLSCIQLWGESNNHLETVIDELFPLKEFVAPLIPLNISCPCCFKDFEWEEAKKNYIKTKNVPTESLELGEDFPVLSNGEKENYSQEENSQNKVIEDGFLEMDIDNHRNRLSYAHETKQKRDILFSDDEFSEISQKCEFIDLTVDSD</sequence>
<organism>
    <name type="scientific">Cryptosporidium parvum (strain Iowa II)</name>
    <dbReference type="NCBI Taxonomy" id="353152"/>
    <lineage>
        <taxon>Eukaryota</taxon>
        <taxon>Sar</taxon>
        <taxon>Alveolata</taxon>
        <taxon>Apicomplexa</taxon>
        <taxon>Conoidasida</taxon>
        <taxon>Coccidia</taxon>
        <taxon>Eucoccidiorida</taxon>
        <taxon>Eimeriorina</taxon>
        <taxon>Cryptosporidiidae</taxon>
        <taxon>Cryptosporidium</taxon>
    </lineage>
</organism>
<proteinExistence type="inferred from homology"/>
<accession>Q5CT62</accession>
<gene>
    <name type="ORF">cgd2_4280</name>
</gene>
<reference key="1">
    <citation type="journal article" date="2004" name="Science">
        <title>Complete genome sequence of the apicomplexan, Cryptosporidium parvum.</title>
        <authorList>
            <person name="Abrahamsen M.S."/>
            <person name="Templeton T.J."/>
            <person name="Enomoto S."/>
            <person name="Abrahante J.E."/>
            <person name="Zhu G."/>
            <person name="Lancto C.A."/>
            <person name="Deng M."/>
            <person name="Liu C."/>
            <person name="Widmer G."/>
            <person name="Tzipori S."/>
            <person name="Buck G.A."/>
            <person name="Xu P."/>
            <person name="Bankier A.T."/>
            <person name="Dear P.H."/>
            <person name="Konfortov B.A."/>
            <person name="Spriggs H.F."/>
            <person name="Iyer L."/>
            <person name="Anantharaman V."/>
            <person name="Aravind L."/>
            <person name="Kapur V."/>
        </authorList>
    </citation>
    <scope>NUCLEOTIDE SEQUENCE [LARGE SCALE GENOMIC DNA]</scope>
    <source>
        <strain>Iowa II</strain>
    </source>
</reference>